<protein>
    <recommendedName>
        <fullName>Sorting nexin-15</fullName>
    </recommendedName>
</protein>
<keyword id="KW-0488">Methylation</keyword>
<keyword id="KW-0597">Phosphoprotein</keyword>
<keyword id="KW-0653">Protein transport</keyword>
<keyword id="KW-1185">Reference proteome</keyword>
<keyword id="KW-0813">Transport</keyword>
<reference key="1">
    <citation type="submission" date="2006-06" db="EMBL/GenBank/DDBJ databases">
        <authorList>
            <consortium name="NIH - Mammalian Gene Collection (MGC) project"/>
        </authorList>
    </citation>
    <scope>NUCLEOTIDE SEQUENCE [LARGE SCALE MRNA]</scope>
    <source>
        <strain>Hereford</strain>
        <tissue>Fetal lung</tissue>
    </source>
</reference>
<feature type="chain" id="PRO_0000290187" description="Sorting nexin-15">
    <location>
        <begin position="1"/>
        <end position="345"/>
    </location>
</feature>
<feature type="domain" description="PX" evidence="4">
    <location>
        <begin position="1"/>
        <end position="130"/>
    </location>
</feature>
<feature type="domain" description="MIT">
    <location>
        <begin position="272"/>
        <end position="345"/>
    </location>
</feature>
<feature type="region of interest" description="Disordered" evidence="5">
    <location>
        <begin position="133"/>
        <end position="163"/>
    </location>
</feature>
<feature type="region of interest" description="Disordered" evidence="5">
    <location>
        <begin position="226"/>
        <end position="274"/>
    </location>
</feature>
<feature type="compositionally biased region" description="Pro residues" evidence="5">
    <location>
        <begin position="141"/>
        <end position="151"/>
    </location>
</feature>
<feature type="modified residue" description="Omega-N-methylarginine" evidence="2">
    <location>
        <position position="105"/>
    </location>
</feature>
<feature type="modified residue" description="Phosphoserine" evidence="3">
    <location>
        <position position="208"/>
    </location>
</feature>
<feature type="modified residue" description="Phosphoserine" evidence="3">
    <location>
        <position position="234"/>
    </location>
</feature>
<accession>Q148E7</accession>
<comment type="function">
    <text evidence="1">May be involved in several stages of intracellular trafficking. Overexpression of SNX15 disrupts the normal trafficking of proteins from the plasma membrane to recycling endosomes or the TGN (By similarity).</text>
</comment>
<comment type="similarity">
    <text evidence="6">Belongs to the sorting nexin family.</text>
</comment>
<name>SNX15_BOVIN</name>
<gene>
    <name type="primary">SNX15</name>
</gene>
<evidence type="ECO:0000250" key="1"/>
<evidence type="ECO:0000250" key="2">
    <source>
        <dbReference type="UniProtKB" id="Q91WE1"/>
    </source>
</evidence>
<evidence type="ECO:0000250" key="3">
    <source>
        <dbReference type="UniProtKB" id="Q9NRS6"/>
    </source>
</evidence>
<evidence type="ECO:0000255" key="4">
    <source>
        <dbReference type="PROSITE-ProRule" id="PRU00147"/>
    </source>
</evidence>
<evidence type="ECO:0000256" key="5">
    <source>
        <dbReference type="SAM" id="MobiDB-lite"/>
    </source>
</evidence>
<evidence type="ECO:0000305" key="6"/>
<proteinExistence type="evidence at transcript level"/>
<sequence>MSRQAKDDFLRHYTVSDPRTHPKGYTEYKVTAQFISKRDPEDVKEVVVWKRYSDFRKLHGDLAYTHRNLFRRLEEFPAFPRGQVFGRFEASVIEERRKGAEDLLRFTVHIPALNNSPQLKEFFRGGEVTRPSEVSGDLHILPPPLIPTPPPDEPRVQPHETWLPQPLPAERRGLEELEVPADPPPSSPAQEALDLLFNCGSTEEASSSPARGPLTEAELALFDPFSKEEGAGPSPTHIGELAALEAGSGRPDQEPWEPGGQAEEDDEEGEPAPAYLSQATELITQALRDEKAGAYPAALQGYRDGVHILLQGVPGDPSPARREGVKKKAAEYLKRAEEILHLHLS</sequence>
<dbReference type="EMBL" id="BC118397">
    <property type="protein sequence ID" value="AAI18398.1"/>
    <property type="molecule type" value="mRNA"/>
</dbReference>
<dbReference type="RefSeq" id="NP_001068798.1">
    <property type="nucleotide sequence ID" value="NM_001075330.2"/>
</dbReference>
<dbReference type="SMR" id="Q148E7"/>
<dbReference type="FunCoup" id="Q148E7">
    <property type="interactions" value="886"/>
</dbReference>
<dbReference type="STRING" id="9913.ENSBTAP00000002897"/>
<dbReference type="PaxDb" id="9913-ENSBTAP00000002897"/>
<dbReference type="GeneID" id="507751"/>
<dbReference type="KEGG" id="bta:507751"/>
<dbReference type="CTD" id="29907"/>
<dbReference type="VEuPathDB" id="HostDB:ENSBTAG00000002243"/>
<dbReference type="eggNOG" id="KOG0603">
    <property type="taxonomic scope" value="Eukaryota"/>
</dbReference>
<dbReference type="eggNOG" id="KOG2101">
    <property type="taxonomic scope" value="Eukaryota"/>
</dbReference>
<dbReference type="HOGENOM" id="CLU_055745_0_0_1"/>
<dbReference type="InParanoid" id="Q148E7"/>
<dbReference type="OMA" id="EMLVDQH"/>
<dbReference type="OrthoDB" id="1278353at2759"/>
<dbReference type="TreeFam" id="TF323964"/>
<dbReference type="Proteomes" id="UP000009136">
    <property type="component" value="Chromosome 29"/>
</dbReference>
<dbReference type="Bgee" id="ENSBTAG00000002243">
    <property type="expression patterns" value="Expressed in choroid plexus and 104 other cell types or tissues"/>
</dbReference>
<dbReference type="GO" id="GO:0035091">
    <property type="term" value="F:phosphatidylinositol binding"/>
    <property type="evidence" value="ECO:0007669"/>
    <property type="project" value="InterPro"/>
</dbReference>
<dbReference type="GO" id="GO:0015031">
    <property type="term" value="P:protein transport"/>
    <property type="evidence" value="ECO:0007669"/>
    <property type="project" value="UniProtKB-KW"/>
</dbReference>
<dbReference type="CDD" id="cd02677">
    <property type="entry name" value="MIT_SNX15"/>
    <property type="match status" value="1"/>
</dbReference>
<dbReference type="FunFam" id="1.20.58.80:FF:000017">
    <property type="entry name" value="sorting nexin-15 isoform X1"/>
    <property type="match status" value="1"/>
</dbReference>
<dbReference type="FunFam" id="3.30.1520.10:FF:000029">
    <property type="entry name" value="sorting nexin-15 isoform X1"/>
    <property type="match status" value="1"/>
</dbReference>
<dbReference type="Gene3D" id="1.20.58.80">
    <property type="entry name" value="Phosphotransferase system, lactose/cellobiose-type IIA subunit"/>
    <property type="match status" value="1"/>
</dbReference>
<dbReference type="Gene3D" id="3.30.1520.10">
    <property type="entry name" value="Phox-like domain"/>
    <property type="match status" value="1"/>
</dbReference>
<dbReference type="InterPro" id="IPR051866">
    <property type="entry name" value="Intracell_Sig-Traffick_Protein"/>
</dbReference>
<dbReference type="InterPro" id="IPR007330">
    <property type="entry name" value="MIT_dom"/>
</dbReference>
<dbReference type="InterPro" id="IPR036181">
    <property type="entry name" value="MIT_dom_sf"/>
</dbReference>
<dbReference type="InterPro" id="IPR001683">
    <property type="entry name" value="PX_dom"/>
</dbReference>
<dbReference type="InterPro" id="IPR036871">
    <property type="entry name" value="PX_dom_sf"/>
</dbReference>
<dbReference type="PANTHER" id="PTHR15508">
    <property type="entry name" value="RIBOSOMAL PROTEIN S6 KINASE"/>
    <property type="match status" value="1"/>
</dbReference>
<dbReference type="PANTHER" id="PTHR15508:SF9">
    <property type="entry name" value="SORTING NEXIN-15"/>
    <property type="match status" value="1"/>
</dbReference>
<dbReference type="Pfam" id="PF04212">
    <property type="entry name" value="MIT"/>
    <property type="match status" value="1"/>
</dbReference>
<dbReference type="Pfam" id="PF00787">
    <property type="entry name" value="PX"/>
    <property type="match status" value="1"/>
</dbReference>
<dbReference type="SMART" id="SM00745">
    <property type="entry name" value="MIT"/>
    <property type="match status" value="1"/>
</dbReference>
<dbReference type="SMART" id="SM00312">
    <property type="entry name" value="PX"/>
    <property type="match status" value="1"/>
</dbReference>
<dbReference type="SUPFAM" id="SSF116846">
    <property type="entry name" value="MIT domain"/>
    <property type="match status" value="1"/>
</dbReference>
<dbReference type="SUPFAM" id="SSF64268">
    <property type="entry name" value="PX domain"/>
    <property type="match status" value="1"/>
</dbReference>
<dbReference type="PROSITE" id="PS50195">
    <property type="entry name" value="PX"/>
    <property type="match status" value="1"/>
</dbReference>
<organism>
    <name type="scientific">Bos taurus</name>
    <name type="common">Bovine</name>
    <dbReference type="NCBI Taxonomy" id="9913"/>
    <lineage>
        <taxon>Eukaryota</taxon>
        <taxon>Metazoa</taxon>
        <taxon>Chordata</taxon>
        <taxon>Craniata</taxon>
        <taxon>Vertebrata</taxon>
        <taxon>Euteleostomi</taxon>
        <taxon>Mammalia</taxon>
        <taxon>Eutheria</taxon>
        <taxon>Laurasiatheria</taxon>
        <taxon>Artiodactyla</taxon>
        <taxon>Ruminantia</taxon>
        <taxon>Pecora</taxon>
        <taxon>Bovidae</taxon>
        <taxon>Bovinae</taxon>
        <taxon>Bos</taxon>
    </lineage>
</organism>